<sequence>MSSGLTGPQKAALKSSWSRFMDNAVTNGTNFYMDLFKAYPDTLTPFKSLFEDVSFNQMTDHPTMKAQALVFCDGMSSFVDNLDDHEVLVVLLQKMAKLHFNRGIRIKELRDGYGVLLRYLEDHCHVEGSTKNAWEDFIAYICRVQGDFMKERL</sequence>
<organism>
    <name type="scientific">Phacoides pectinatus</name>
    <name type="common">Thick lucine</name>
    <name type="synonym">Lucina pectinata</name>
    <dbReference type="NCBI Taxonomy" id="244486"/>
    <lineage>
        <taxon>Eukaryota</taxon>
        <taxon>Metazoa</taxon>
        <taxon>Spiralia</taxon>
        <taxon>Lophotrochozoa</taxon>
        <taxon>Mollusca</taxon>
        <taxon>Bivalvia</taxon>
        <taxon>Autobranchia</taxon>
        <taxon>Heteroconchia</taxon>
        <taxon>Euheterodonta</taxon>
        <taxon>Imparidentia</taxon>
        <taxon>Lucinida</taxon>
        <taxon>Lucinoidea</taxon>
        <taxon>Lucinidae</taxon>
        <taxon>Phacoides</taxon>
    </lineage>
</organism>
<evidence type="ECO:0000255" key="1">
    <source>
        <dbReference type="PROSITE-ProRule" id="PRU00238"/>
    </source>
</evidence>
<evidence type="ECO:0000269" key="2">
    <source>
    </source>
</evidence>
<evidence type="ECO:0000269" key="3">
    <source>
    </source>
</evidence>
<evidence type="ECO:0007829" key="4">
    <source>
        <dbReference type="PDB" id="3PT8"/>
    </source>
</evidence>
<keyword id="KW-0002">3D-structure</keyword>
<keyword id="KW-0007">Acetylation</keyword>
<keyword id="KW-0963">Cytoplasm</keyword>
<keyword id="KW-0903">Direct protein sequencing</keyword>
<keyword id="KW-0349">Heme</keyword>
<keyword id="KW-0408">Iron</keyword>
<keyword id="KW-0479">Metal-binding</keyword>
<keyword id="KW-0561">Oxygen transport</keyword>
<keyword id="KW-0813">Transport</keyword>
<comment type="subunit">
    <text evidence="2">Homotetramer.</text>
</comment>
<comment type="subcellular location">
    <subcellularLocation>
        <location>Cytoplasm</location>
    </subcellularLocation>
</comment>
<comment type="miscellaneous">
    <text>This molluscan globin lacks one of the heme-binding histidine residues found in most other globins.</text>
</comment>
<comment type="similarity">
    <text evidence="1">Belongs to the globin family.</text>
</comment>
<dbReference type="PIR" id="A53873">
    <property type="entry name" value="A53873"/>
</dbReference>
<dbReference type="PDB" id="3PT7">
    <property type="method" value="X-ray"/>
    <property type="resolution" value="2.15 A"/>
    <property type="chains" value="B=2-153"/>
</dbReference>
<dbReference type="PDB" id="3PT8">
    <property type="method" value="X-ray"/>
    <property type="resolution" value="1.76 A"/>
    <property type="chains" value="B=2-153"/>
</dbReference>
<dbReference type="PDB" id="6OTW">
    <property type="method" value="X-ray"/>
    <property type="resolution" value="2.45 A"/>
    <property type="chains" value="B=2-153"/>
</dbReference>
<dbReference type="PDB" id="6OTX">
    <property type="method" value="X-ray"/>
    <property type="resolution" value="2.54 A"/>
    <property type="chains" value="B=2-153"/>
</dbReference>
<dbReference type="PDB" id="6OTY">
    <property type="method" value="X-ray"/>
    <property type="resolution" value="2.60 A"/>
    <property type="chains" value="B=2-153"/>
</dbReference>
<dbReference type="PDBsum" id="3PT7"/>
<dbReference type="PDBsum" id="3PT8"/>
<dbReference type="PDBsum" id="6OTW"/>
<dbReference type="PDBsum" id="6OTX"/>
<dbReference type="PDBsum" id="6OTY"/>
<dbReference type="SMR" id="P41262"/>
<dbReference type="iPTMnet" id="P41262"/>
<dbReference type="EvolutionaryTrace" id="P41262"/>
<dbReference type="GO" id="GO:0005737">
    <property type="term" value="C:cytoplasm"/>
    <property type="evidence" value="ECO:0007669"/>
    <property type="project" value="UniProtKB-SubCell"/>
</dbReference>
<dbReference type="GO" id="GO:0020037">
    <property type="term" value="F:heme binding"/>
    <property type="evidence" value="ECO:0007669"/>
    <property type="project" value="InterPro"/>
</dbReference>
<dbReference type="GO" id="GO:0046872">
    <property type="term" value="F:metal ion binding"/>
    <property type="evidence" value="ECO:0007669"/>
    <property type="project" value="UniProtKB-KW"/>
</dbReference>
<dbReference type="GO" id="GO:0019825">
    <property type="term" value="F:oxygen binding"/>
    <property type="evidence" value="ECO:0007669"/>
    <property type="project" value="InterPro"/>
</dbReference>
<dbReference type="GO" id="GO:0005344">
    <property type="term" value="F:oxygen carrier activity"/>
    <property type="evidence" value="ECO:0007669"/>
    <property type="project" value="UniProtKB-KW"/>
</dbReference>
<dbReference type="CDD" id="cd01040">
    <property type="entry name" value="Mb-like"/>
    <property type="match status" value="1"/>
</dbReference>
<dbReference type="Gene3D" id="1.10.490.10">
    <property type="entry name" value="Globins"/>
    <property type="match status" value="1"/>
</dbReference>
<dbReference type="InterPro" id="IPR000971">
    <property type="entry name" value="Globin"/>
</dbReference>
<dbReference type="InterPro" id="IPR009050">
    <property type="entry name" value="Globin-like_sf"/>
</dbReference>
<dbReference type="InterPro" id="IPR012292">
    <property type="entry name" value="Globin/Proto"/>
</dbReference>
<dbReference type="InterPro" id="IPR044399">
    <property type="entry name" value="Mb-like_M"/>
</dbReference>
<dbReference type="PANTHER" id="PTHR47217">
    <property type="entry name" value="GLOBIN-LIKE PROTEIN"/>
    <property type="match status" value="1"/>
</dbReference>
<dbReference type="PANTHER" id="PTHR47217:SF1">
    <property type="entry name" value="GLOBIN-LIKE PROTEIN"/>
    <property type="match status" value="1"/>
</dbReference>
<dbReference type="Pfam" id="PF00042">
    <property type="entry name" value="Globin"/>
    <property type="match status" value="1"/>
</dbReference>
<dbReference type="SUPFAM" id="SSF46458">
    <property type="entry name" value="Globin-like"/>
    <property type="match status" value="1"/>
</dbReference>
<dbReference type="PROSITE" id="PS01033">
    <property type="entry name" value="GLOBIN"/>
    <property type="match status" value="1"/>
</dbReference>
<feature type="initiator methionine" description="Removed" evidence="3">
    <location>
        <position position="1"/>
    </location>
</feature>
<feature type="chain" id="PRO_0000052494" description="Hemoglobin-3">
    <location>
        <begin position="2"/>
        <end position="153"/>
    </location>
</feature>
<feature type="domain" description="Globin" evidence="1">
    <location>
        <begin position="4"/>
        <end position="150"/>
    </location>
</feature>
<feature type="binding site" description="proximal binding residue">
    <location>
        <position position="99"/>
    </location>
    <ligand>
        <name>heme b</name>
        <dbReference type="ChEBI" id="CHEBI:60344"/>
    </ligand>
    <ligandPart>
        <name>Fe</name>
        <dbReference type="ChEBI" id="CHEBI:18248"/>
    </ligandPart>
</feature>
<feature type="modified residue" description="N-acetylserine" evidence="3">
    <location>
        <position position="2"/>
    </location>
</feature>
<feature type="helix" evidence="4">
    <location>
        <begin position="7"/>
        <end position="21"/>
    </location>
</feature>
<feature type="helix" evidence="4">
    <location>
        <begin position="24"/>
        <end position="38"/>
    </location>
</feature>
<feature type="helix" evidence="4">
    <location>
        <begin position="40"/>
        <end position="46"/>
    </location>
</feature>
<feature type="turn" evidence="4">
    <location>
        <begin position="47"/>
        <end position="52"/>
    </location>
</feature>
<feature type="helix" evidence="4">
    <location>
        <begin position="55"/>
        <end position="58"/>
    </location>
</feature>
<feature type="helix" evidence="4">
    <location>
        <begin position="62"/>
        <end position="79"/>
    </location>
</feature>
<feature type="turn" evidence="4">
    <location>
        <begin position="80"/>
        <end position="83"/>
    </location>
</feature>
<feature type="helix" evidence="4">
    <location>
        <begin position="85"/>
        <end position="100"/>
    </location>
</feature>
<feature type="turn" evidence="4">
    <location>
        <begin position="101"/>
        <end position="103"/>
    </location>
</feature>
<feature type="helix" evidence="4">
    <location>
        <begin position="106"/>
        <end position="122"/>
    </location>
</feature>
<feature type="helix" evidence="4">
    <location>
        <begin position="128"/>
        <end position="150"/>
    </location>
</feature>
<proteinExistence type="evidence at protein level"/>
<name>GLB3_PHAPT</name>
<accession>P41262</accession>
<protein>
    <recommendedName>
        <fullName>Hemoglobin-3</fullName>
    </recommendedName>
    <alternativeName>
        <fullName>Hemoglobin III</fullName>
        <shortName>Hb III</shortName>
    </alternativeName>
</protein>
<reference key="1">
    <citation type="journal article" date="1993" name="J. Protein Chem.">
        <title>The amino acid sequence of hemoglobin III from the symbiont-harboring clam Lucina pectinata.</title>
        <authorList>
            <person name="Hockenhull-Johnson J.D."/>
            <person name="Stern M.S."/>
            <person name="Wittenberg J.B."/>
            <person name="Vinogradov S.N."/>
            <person name="Kapp O.H."/>
            <person name="Walz D.A."/>
        </authorList>
    </citation>
    <scope>PROTEIN SEQUENCE OF 2-153</scope>
    <scope>ACETYLATION AT SER-2</scope>
    <source>
        <tissue>Gill</tissue>
    </source>
</reference>
<reference key="2">
    <citation type="journal article" date="1990" name="J. Biol. Chem.">
        <title>Hemoglobins of the Lucina pectinata/bacteria symbiosis. I. Molecular properties, kinetics and equilibria of reactions with ligands.</title>
        <authorList>
            <person name="Kraus D.W."/>
            <person name="Wittenberg J.B."/>
        </authorList>
    </citation>
    <scope>CHARACTERIZATION</scope>
</reference>
<reference key="3">
    <citation type="journal article" date="2008" name="J. Biol. Chem.">
        <title>Structure and ligand selection of hemoglobin II from Lucina pectinata.</title>
        <authorList>
            <person name="Gavira J.A."/>
            <person name="Camara-Artigas A."/>
            <person name="De Jesus-Bonilla W."/>
            <person name="Lopez-Garriga J."/>
            <person name="Lewis A."/>
            <person name="Pietri R."/>
            <person name="Yeh S.R."/>
            <person name="Cadilla C.L."/>
            <person name="Garcia-Ruiz J.M."/>
        </authorList>
    </citation>
    <scope>X-RAY CRYSTALLOGRAPHY (1.93 ANGSTROMS) IN COMPLEX WITH HEME</scope>
</reference>